<dbReference type="EMBL" id="M63768">
    <property type="protein sequence ID" value="AAA52267.1"/>
    <property type="molecule type" value="Genomic_RNA"/>
</dbReference>
<dbReference type="SMR" id="P68042"/>
<dbReference type="GO" id="GO:0019029">
    <property type="term" value="C:helical viral capsid"/>
    <property type="evidence" value="ECO:0007669"/>
    <property type="project" value="UniProtKB-UniRule"/>
</dbReference>
<dbReference type="GO" id="GO:0043657">
    <property type="term" value="C:host cell"/>
    <property type="evidence" value="ECO:0007669"/>
    <property type="project" value="GOC"/>
</dbReference>
<dbReference type="GO" id="GO:0042025">
    <property type="term" value="C:host cell nucleus"/>
    <property type="evidence" value="ECO:0007669"/>
    <property type="project" value="UniProtKB-SubCell"/>
</dbReference>
<dbReference type="GO" id="GO:1990904">
    <property type="term" value="C:ribonucleoprotein complex"/>
    <property type="evidence" value="ECO:0007669"/>
    <property type="project" value="UniProtKB-KW"/>
</dbReference>
<dbReference type="GO" id="GO:0019013">
    <property type="term" value="C:viral nucleocapsid"/>
    <property type="evidence" value="ECO:0007669"/>
    <property type="project" value="UniProtKB-UniRule"/>
</dbReference>
<dbReference type="GO" id="GO:0003723">
    <property type="term" value="F:RNA binding"/>
    <property type="evidence" value="ECO:0007669"/>
    <property type="project" value="UniProtKB-UniRule"/>
</dbReference>
<dbReference type="GO" id="GO:0005198">
    <property type="term" value="F:structural molecule activity"/>
    <property type="evidence" value="ECO:0007669"/>
    <property type="project" value="UniProtKB-UniRule"/>
</dbReference>
<dbReference type="GO" id="GO:0046718">
    <property type="term" value="P:symbiont entry into host cell"/>
    <property type="evidence" value="ECO:0007669"/>
    <property type="project" value="UniProtKB-KW"/>
</dbReference>
<dbReference type="GO" id="GO:0075732">
    <property type="term" value="P:viral penetration into host nucleus"/>
    <property type="evidence" value="ECO:0007669"/>
    <property type="project" value="UniProtKB-UniRule"/>
</dbReference>
<dbReference type="HAMAP" id="MF_04070">
    <property type="entry name" value="INFV_NCAP"/>
    <property type="match status" value="1"/>
</dbReference>
<dbReference type="InterPro" id="IPR002141">
    <property type="entry name" value="Flu_NP"/>
</dbReference>
<dbReference type="Pfam" id="PF00506">
    <property type="entry name" value="Flu_NP"/>
    <property type="match status" value="1"/>
</dbReference>
<dbReference type="SUPFAM" id="SSF161003">
    <property type="entry name" value="flu NP-like"/>
    <property type="match status" value="1"/>
</dbReference>
<proteinExistence type="inferred from homology"/>
<organism>
    <name type="scientific">Influenza A virus (strain A/Swine/Iowa/17672/1988 H1N1)</name>
    <dbReference type="NCBI Taxonomy" id="380341"/>
    <lineage>
        <taxon>Viruses</taxon>
        <taxon>Riboviria</taxon>
        <taxon>Orthornavirae</taxon>
        <taxon>Negarnaviricota</taxon>
        <taxon>Polyploviricotina</taxon>
        <taxon>Insthoviricetes</taxon>
        <taxon>Articulavirales</taxon>
        <taxon>Orthomyxoviridae</taxon>
        <taxon>Alphainfluenzavirus</taxon>
        <taxon>Alphainfluenzavirus influenzae</taxon>
        <taxon>Influenza A virus</taxon>
    </lineage>
</organism>
<protein>
    <recommendedName>
        <fullName evidence="1">Nucleoprotein</fullName>
    </recommendedName>
    <alternativeName>
        <fullName evidence="1">Nucleocapsid protein</fullName>
        <shortName evidence="1">Protein N</shortName>
    </alternativeName>
</protein>
<organismHost>
    <name type="scientific">Aves</name>
    <dbReference type="NCBI Taxonomy" id="8782"/>
</organismHost>
<organismHost>
    <name type="scientific">Homo sapiens</name>
    <name type="common">Human</name>
    <dbReference type="NCBI Taxonomy" id="9606"/>
</organismHost>
<organismHost>
    <name type="scientific">Sus scrofa</name>
    <name type="common">Pig</name>
    <dbReference type="NCBI Taxonomy" id="9823"/>
</organismHost>
<evidence type="ECO:0000255" key="1">
    <source>
        <dbReference type="HAMAP-Rule" id="MF_04070"/>
    </source>
</evidence>
<evidence type="ECO:0000256" key="2">
    <source>
        <dbReference type="SAM" id="MobiDB-lite"/>
    </source>
</evidence>
<feature type="chain" id="PRO_0000079126" description="Nucleoprotein">
    <location>
        <begin position="1"/>
        <end position="498"/>
    </location>
</feature>
<feature type="region of interest" description="Disordered" evidence="2">
    <location>
        <begin position="1"/>
        <end position="22"/>
    </location>
</feature>
<feature type="short sequence motif" description="Unconventional nuclear localization signal" evidence="1">
    <location>
        <begin position="1"/>
        <end position="18"/>
    </location>
</feature>
<feature type="short sequence motif" description="Bipartite nuclear localization signal" evidence="1">
    <location>
        <begin position="198"/>
        <end position="216"/>
    </location>
</feature>
<feature type="compositionally biased region" description="Basic and acidic residues" evidence="2">
    <location>
        <begin position="8"/>
        <end position="22"/>
    </location>
</feature>
<accession>P68042</accession>
<accession>P26075</accession>
<comment type="function">
    <text evidence="1">Encapsidates the negative strand viral RNA, protecting it from nucleases. The encapsidated genomic RNA is termed the ribonucleoprotein (RNP) and serves as template for transcription and replication. The RNP needs to be localized in the host nucleus to start an infectious cycle, but is too large to diffuse through the nuclear pore complex. NP comprises at least 2 nuclear localization signals that are responsible for the active RNP import into the nucleus through cellular importin alpha/beta pathway. Later in the infection, nclear export of RNPs are mediated through viral proteins NEP interacting with M1 which binds nucleoproteins. It is possible that nucleoprotein binds directly host exportin-1/XPO1 and plays an active role in RNPs nuclear export. M1 interaction with RNP seems to hide nucleoprotein's nuclear localization signals. Soon after a virion infects a new cell, M1 dissociates from the RNP under acidification of the virion driven by M2 protein. Dissociation of M1 from RNP unmasks nucleoprotein's nuclear localization signals, targeting the RNP to the nucleus.</text>
</comment>
<comment type="subunit">
    <text evidence="1">Homomultimerizes to form the nucleocapsid. May bind host exportin-1/XPO1. Binds to viral genomic RNA. Protein-RNA contacts are mediated by a combination of electrostatic interactions between positively charged residues and the phosphate backbone and planar interactions between aromatic side chains and bases.</text>
</comment>
<comment type="subcellular location">
    <subcellularLocation>
        <location evidence="1">Virion</location>
    </subcellularLocation>
    <subcellularLocation>
        <location evidence="1">Host nucleus</location>
    </subcellularLocation>
</comment>
<comment type="PTM">
    <text evidence="1">Late in virus-infected cells, may be cleaved from a 56-kDa protein to a 53-kDa protein by a cellular caspase. This cleavage might be a marker for the onset of apoptosis in infected cells or have a specific function in virus host interaction.</text>
</comment>
<comment type="similarity">
    <text evidence="1">Belongs to the influenza viruses nucleoprotein family.</text>
</comment>
<keyword id="KW-0167">Capsid protein</keyword>
<keyword id="KW-1139">Helical capsid protein</keyword>
<keyword id="KW-1048">Host nucleus</keyword>
<keyword id="KW-0945">Host-virus interaction</keyword>
<keyword id="KW-0687">Ribonucleoprotein</keyword>
<keyword id="KW-0694">RNA-binding</keyword>
<keyword id="KW-0543">Viral nucleoprotein</keyword>
<keyword id="KW-1163">Viral penetration into host nucleus</keyword>
<keyword id="KW-0946">Virion</keyword>
<keyword id="KW-1160">Virus entry into host cell</keyword>
<sequence>MASQGTKRSYEQMETGGERQDATEIRASVGRMIGGIGRFYIQMCTELKLSDYEGRLIQNSITIERMVLSAFDERRNKYLEEHPSAGKDPKKTGGPIYRRVDGKWMRELILYDKEEIRRVWRQANNGEDATAGLTHIMIWHSNLNDATYQRTRALVRTGMDPRMCSLMQGSTLPRRSGAAGAAVKGVGTIAMELIRMIKRGINDRNFWRGENGRRTRIAYERMCNILKGKFQTAAQRAMMDQVRESRNPGNAEIEDLIFLARSALILRGSVAHKSCLPACVYGLAVASGHDFEREGYSLVGIDPFKLLQNSQVFSLIRPNENPAHKSQLVWMACHSAAFEDLRVSSFIRGKKVVPRGKLSTRGVQIASNENVEAMDSSTLELRSRYWAIRTRSGGNTNQQKASAGQISVQPTFSVQRNLPFERATVMAAFSGNNEGRTSDMRTEVIRMMESAKPEDLSFQGRGVFELSDEKATNPIVPSFDMSNEGSYFFGDNAEEYDN</sequence>
<gene>
    <name evidence="1" type="primary">NP</name>
</gene>
<name>NCAP_I88A5</name>
<reference key="1">
    <citation type="journal article" date="1991" name="J. Virol.">
        <title>Evolution of influenza A virus nucleoprotein genes: implications for the origins of H1N1 human and classical swine viruses.</title>
        <authorList>
            <person name="Gorman O.T."/>
            <person name="Bean W.J."/>
            <person name="Kawaoka Y."/>
            <person name="Donatelli I."/>
            <person name="Guo Y."/>
            <person name="Webster R.G."/>
        </authorList>
    </citation>
    <scope>NUCLEOTIDE SEQUENCE [GENOMIC RNA]</scope>
</reference>